<organism>
    <name type="scientific">Francisella tularensis subsp. holarctica (strain OSU18)</name>
    <dbReference type="NCBI Taxonomy" id="393011"/>
    <lineage>
        <taxon>Bacteria</taxon>
        <taxon>Pseudomonadati</taxon>
        <taxon>Pseudomonadota</taxon>
        <taxon>Gammaproteobacteria</taxon>
        <taxon>Thiotrichales</taxon>
        <taxon>Francisellaceae</taxon>
        <taxon>Francisella</taxon>
    </lineage>
</organism>
<evidence type="ECO:0000255" key="1">
    <source>
        <dbReference type="HAMAP-Rule" id="MF_00332"/>
    </source>
</evidence>
<evidence type="ECO:0000256" key="2">
    <source>
        <dbReference type="SAM" id="MobiDB-lite"/>
    </source>
</evidence>
<comment type="function">
    <text evidence="1">Acts as a chaperone.</text>
</comment>
<comment type="induction">
    <text evidence="1">By stress conditions e.g. heat shock.</text>
</comment>
<comment type="similarity">
    <text evidence="1">Belongs to the heat shock protein 70 family.</text>
</comment>
<name>DNAK_FRATO</name>
<proteinExistence type="inferred from homology"/>
<keyword id="KW-0067">ATP-binding</keyword>
<keyword id="KW-0143">Chaperone</keyword>
<keyword id="KW-0547">Nucleotide-binding</keyword>
<keyword id="KW-0597">Phosphoprotein</keyword>
<keyword id="KW-0346">Stress response</keyword>
<dbReference type="EMBL" id="CP000437">
    <property type="protein sequence ID" value="ABI83030.1"/>
    <property type="molecule type" value="Genomic_DNA"/>
</dbReference>
<dbReference type="RefSeq" id="WP_003016262.1">
    <property type="nucleotide sequence ID" value="NC_017463.1"/>
</dbReference>
<dbReference type="SMR" id="Q0BLK4"/>
<dbReference type="GeneID" id="75264984"/>
<dbReference type="KEGG" id="fth:FTH_1167"/>
<dbReference type="GO" id="GO:0005524">
    <property type="term" value="F:ATP binding"/>
    <property type="evidence" value="ECO:0007669"/>
    <property type="project" value="UniProtKB-UniRule"/>
</dbReference>
<dbReference type="GO" id="GO:0140662">
    <property type="term" value="F:ATP-dependent protein folding chaperone"/>
    <property type="evidence" value="ECO:0007669"/>
    <property type="project" value="InterPro"/>
</dbReference>
<dbReference type="GO" id="GO:0051082">
    <property type="term" value="F:unfolded protein binding"/>
    <property type="evidence" value="ECO:0007669"/>
    <property type="project" value="InterPro"/>
</dbReference>
<dbReference type="CDD" id="cd10234">
    <property type="entry name" value="ASKHA_NBD_HSP70_DnaK-like"/>
    <property type="match status" value="1"/>
</dbReference>
<dbReference type="FunFam" id="2.60.34.10:FF:000014">
    <property type="entry name" value="Chaperone protein DnaK HSP70"/>
    <property type="match status" value="1"/>
</dbReference>
<dbReference type="FunFam" id="1.20.1270.10:FF:000001">
    <property type="entry name" value="Molecular chaperone DnaK"/>
    <property type="match status" value="1"/>
</dbReference>
<dbReference type="FunFam" id="3.30.420.40:FF:000004">
    <property type="entry name" value="Molecular chaperone DnaK"/>
    <property type="match status" value="1"/>
</dbReference>
<dbReference type="FunFam" id="3.90.640.10:FF:000003">
    <property type="entry name" value="Molecular chaperone DnaK"/>
    <property type="match status" value="1"/>
</dbReference>
<dbReference type="Gene3D" id="1.20.1270.10">
    <property type="match status" value="1"/>
</dbReference>
<dbReference type="Gene3D" id="3.30.420.40">
    <property type="match status" value="2"/>
</dbReference>
<dbReference type="Gene3D" id="3.90.640.10">
    <property type="entry name" value="Actin, Chain A, domain 4"/>
    <property type="match status" value="1"/>
</dbReference>
<dbReference type="Gene3D" id="2.60.34.10">
    <property type="entry name" value="Substrate Binding Domain Of DNAk, Chain A, domain 1"/>
    <property type="match status" value="1"/>
</dbReference>
<dbReference type="HAMAP" id="MF_00332">
    <property type="entry name" value="DnaK"/>
    <property type="match status" value="1"/>
</dbReference>
<dbReference type="InterPro" id="IPR043129">
    <property type="entry name" value="ATPase_NBD"/>
</dbReference>
<dbReference type="InterPro" id="IPR012725">
    <property type="entry name" value="Chaperone_DnaK"/>
</dbReference>
<dbReference type="InterPro" id="IPR018181">
    <property type="entry name" value="Heat_shock_70_CS"/>
</dbReference>
<dbReference type="InterPro" id="IPR029048">
    <property type="entry name" value="HSP70_C_sf"/>
</dbReference>
<dbReference type="InterPro" id="IPR029047">
    <property type="entry name" value="HSP70_peptide-bd_sf"/>
</dbReference>
<dbReference type="InterPro" id="IPR013126">
    <property type="entry name" value="Hsp_70_fam"/>
</dbReference>
<dbReference type="NCBIfam" id="NF001413">
    <property type="entry name" value="PRK00290.1"/>
    <property type="match status" value="1"/>
</dbReference>
<dbReference type="NCBIfam" id="NF003520">
    <property type="entry name" value="PRK05183.1"/>
    <property type="match status" value="1"/>
</dbReference>
<dbReference type="NCBIfam" id="TIGR02350">
    <property type="entry name" value="prok_dnaK"/>
    <property type="match status" value="1"/>
</dbReference>
<dbReference type="PANTHER" id="PTHR19375">
    <property type="entry name" value="HEAT SHOCK PROTEIN 70KDA"/>
    <property type="match status" value="1"/>
</dbReference>
<dbReference type="Pfam" id="PF00012">
    <property type="entry name" value="HSP70"/>
    <property type="match status" value="1"/>
</dbReference>
<dbReference type="PRINTS" id="PR00301">
    <property type="entry name" value="HEATSHOCK70"/>
</dbReference>
<dbReference type="SUPFAM" id="SSF53067">
    <property type="entry name" value="Actin-like ATPase domain"/>
    <property type="match status" value="2"/>
</dbReference>
<dbReference type="SUPFAM" id="SSF100934">
    <property type="entry name" value="Heat shock protein 70kD (HSP70), C-terminal subdomain"/>
    <property type="match status" value="1"/>
</dbReference>
<dbReference type="SUPFAM" id="SSF100920">
    <property type="entry name" value="Heat shock protein 70kD (HSP70), peptide-binding domain"/>
    <property type="match status" value="1"/>
</dbReference>
<dbReference type="PROSITE" id="PS00297">
    <property type="entry name" value="HSP70_1"/>
    <property type="match status" value="1"/>
</dbReference>
<dbReference type="PROSITE" id="PS00329">
    <property type="entry name" value="HSP70_2"/>
    <property type="match status" value="1"/>
</dbReference>
<dbReference type="PROSITE" id="PS01036">
    <property type="entry name" value="HSP70_3"/>
    <property type="match status" value="1"/>
</dbReference>
<protein>
    <recommendedName>
        <fullName evidence="1">Chaperone protein DnaK</fullName>
    </recommendedName>
    <alternativeName>
        <fullName evidence="1">HSP70</fullName>
    </alternativeName>
    <alternativeName>
        <fullName evidence="1">Heat shock 70 kDa protein</fullName>
    </alternativeName>
    <alternativeName>
        <fullName evidence="1">Heat shock protein 70</fullName>
    </alternativeName>
</protein>
<accession>Q0BLK4</accession>
<sequence>MGKIIGIDLGTTNSCLAIMDGKTAKVIENAEGHRTTPSVVAYTDSGEILVGQAAKRQAVTNPDNTFFAIKRLIGRKYDDKAVQEDIKKKVPYAVIKADNGDAWVATKEGKKMAPPQVSAEVLRKMKKTAEDYLGEPVTEAVITVPAYFNDSQRQATKDAGKIAGLEVKRIINEPTAAALAYGVDSKKGEQTVAVYDLGGGTFDISIIEIADVDGDNQIEVLSTNGDTFLGGEDFDLALMNYLIDEFKKEQGIDLHNDKLALQRVREAAEKAKVELSSAQQTDVNLPYITADATGPKHLNIKVTRAKFESLVSDLVMRSLEPCKKALEDAGLSKSDITEVLLVGGQTRMPLVQEKVKEFFGKEPRKDVNPDEAVAVGAAIQGGVLAGDVKDVLLLDVTPLSLGIETMGGVMTKLIERNTTIPTKKSQVFSTAEDNQPAVTIHVLQGEREMASANKSLGRFDLADIPPAPRGMPQIEVTFDIDANGILNVSAKDKATGKEQNIVIKSSSGLSEEDIEKMVQDAEANAEADKKFHDLVTARNTADNLIHSSRKAIQELGDKVTAAEKEKIEEACKELEAATKGDDKQAIEAKTKALEEAFAPIAQKAYAEQAQAAGAQGGAKAEEPKKEEDVVDADFEDVEDDKK</sequence>
<feature type="chain" id="PRO_1000059565" description="Chaperone protein DnaK">
    <location>
        <begin position="1"/>
        <end position="642"/>
    </location>
</feature>
<feature type="region of interest" description="Disordered" evidence="2">
    <location>
        <begin position="609"/>
        <end position="642"/>
    </location>
</feature>
<feature type="compositionally biased region" description="Acidic residues" evidence="2">
    <location>
        <begin position="628"/>
        <end position="642"/>
    </location>
</feature>
<feature type="modified residue" description="Phosphothreonine; by autocatalysis" evidence="1">
    <location>
        <position position="201"/>
    </location>
</feature>
<reference key="1">
    <citation type="journal article" date="2006" name="J. Bacteriol.">
        <title>Chromosome rearrangement and diversification of Francisella tularensis revealed by the type B (OSU18) genome sequence.</title>
        <authorList>
            <person name="Petrosino J.F."/>
            <person name="Xiang Q."/>
            <person name="Karpathy S.E."/>
            <person name="Jiang H."/>
            <person name="Yerrapragada S."/>
            <person name="Liu Y."/>
            <person name="Gioia J."/>
            <person name="Hemphill L."/>
            <person name="Gonzalez A."/>
            <person name="Raghavan T.M."/>
            <person name="Uzman A."/>
            <person name="Fox G.E."/>
            <person name="Highlander S."/>
            <person name="Reichard M."/>
            <person name="Morton R.J."/>
            <person name="Clinkenbeard K.D."/>
            <person name="Weinstock G.M."/>
        </authorList>
    </citation>
    <scope>NUCLEOTIDE SEQUENCE [LARGE SCALE GENOMIC DNA]</scope>
    <source>
        <strain>OSU18</strain>
    </source>
</reference>
<gene>
    <name evidence="1" type="primary">dnaK</name>
    <name type="ordered locus">FTH_1167</name>
</gene>